<gene>
    <name evidence="1" type="primary">ilvD</name>
    <name type="ordered locus">SG3538</name>
</gene>
<feature type="chain" id="PRO_1000089408" description="Dihydroxy-acid dehydratase">
    <location>
        <begin position="1"/>
        <end position="616"/>
    </location>
</feature>
<feature type="active site" description="Proton acceptor" evidence="1">
    <location>
        <position position="517"/>
    </location>
</feature>
<feature type="binding site" evidence="1">
    <location>
        <position position="81"/>
    </location>
    <ligand>
        <name>Mg(2+)</name>
        <dbReference type="ChEBI" id="CHEBI:18420"/>
    </ligand>
</feature>
<feature type="binding site" evidence="1">
    <location>
        <position position="122"/>
    </location>
    <ligand>
        <name>[2Fe-2S] cluster</name>
        <dbReference type="ChEBI" id="CHEBI:190135"/>
    </ligand>
</feature>
<feature type="binding site" evidence="1">
    <location>
        <position position="123"/>
    </location>
    <ligand>
        <name>Mg(2+)</name>
        <dbReference type="ChEBI" id="CHEBI:18420"/>
    </ligand>
</feature>
<feature type="binding site" description="via carbamate group" evidence="1">
    <location>
        <position position="124"/>
    </location>
    <ligand>
        <name>Mg(2+)</name>
        <dbReference type="ChEBI" id="CHEBI:18420"/>
    </ligand>
</feature>
<feature type="binding site" evidence="1">
    <location>
        <position position="195"/>
    </location>
    <ligand>
        <name>[2Fe-2S] cluster</name>
        <dbReference type="ChEBI" id="CHEBI:190135"/>
    </ligand>
</feature>
<feature type="binding site" evidence="1">
    <location>
        <position position="491"/>
    </location>
    <ligand>
        <name>Mg(2+)</name>
        <dbReference type="ChEBI" id="CHEBI:18420"/>
    </ligand>
</feature>
<feature type="modified residue" description="N6-carboxylysine" evidence="1">
    <location>
        <position position="124"/>
    </location>
</feature>
<evidence type="ECO:0000255" key="1">
    <source>
        <dbReference type="HAMAP-Rule" id="MF_00012"/>
    </source>
</evidence>
<sequence>MPKYRSATTTHGRNMAGARALWRATGMTDSDFGKPIIAVVNSFTQFVPGHVHLRDLGKLVAEQIEASGGVAKEFNTIAVDDGIAMGHGGMLYSLPSRELIADSVEYMVNAHCADAMVCISNCDKITPGMLMASLRLNIPVIFVSGGPMEAGKTKLSDKIIKLDLVDAMIQGADPKVSDDQSNQVERSACPTCGSCSGMFTANSMNCLTEALGLSQPGNGSLLATHADRKQLFLNAGKRIVELTKRYYEQNDESALPRNIASKAAFENAMTLDIAMGGSTNTVLHLLAAAQEAEIDFTMSDIDKLSRKVPQLCKVAPSTQKYHMEDVHRAGGVLGILGELDRAGLLNCNVKNVLGLTLPQTLEQYDITVTQDEAVKKMFRAGPAGIRTTQAFSQDCRWDSLDDDRSAGCIRSLEYAYSKDGGLAVLYGNFAENGCIVKTAGVDDSILKFTGPAKVYESQDDAVEAILGGKVVEGDVVVIRYEGPKGGPGMQEMLYPTSFLKSMGLGKACALITDGRFSGGTSGLSIGHVSPEAASGGTIALIEDGDTIAIDIPNRSIQLQLNEAEIAARREAQEARGDKAWTPKNRQRQVSFALRAYASLATSADKGAVRDKSKLGG</sequence>
<protein>
    <recommendedName>
        <fullName evidence="1">Dihydroxy-acid dehydratase</fullName>
        <shortName evidence="1">DAD</shortName>
        <ecNumber evidence="1">4.2.1.9</ecNumber>
    </recommendedName>
</protein>
<accession>B5RFT3</accession>
<dbReference type="EC" id="4.2.1.9" evidence="1"/>
<dbReference type="EMBL" id="AM933173">
    <property type="protein sequence ID" value="CAR39327.1"/>
    <property type="molecule type" value="Genomic_DNA"/>
</dbReference>
<dbReference type="RefSeq" id="WP_001127432.1">
    <property type="nucleotide sequence ID" value="NC_011274.1"/>
</dbReference>
<dbReference type="SMR" id="B5RFT3"/>
<dbReference type="KEGG" id="seg:SG3538"/>
<dbReference type="HOGENOM" id="CLU_014271_4_2_6"/>
<dbReference type="UniPathway" id="UPA00047">
    <property type="reaction ID" value="UER00057"/>
</dbReference>
<dbReference type="UniPathway" id="UPA00049">
    <property type="reaction ID" value="UER00061"/>
</dbReference>
<dbReference type="Proteomes" id="UP000008321">
    <property type="component" value="Chromosome"/>
</dbReference>
<dbReference type="GO" id="GO:0005829">
    <property type="term" value="C:cytosol"/>
    <property type="evidence" value="ECO:0007669"/>
    <property type="project" value="TreeGrafter"/>
</dbReference>
<dbReference type="GO" id="GO:0051537">
    <property type="term" value="F:2 iron, 2 sulfur cluster binding"/>
    <property type="evidence" value="ECO:0007669"/>
    <property type="project" value="UniProtKB-UniRule"/>
</dbReference>
<dbReference type="GO" id="GO:0004160">
    <property type="term" value="F:dihydroxy-acid dehydratase activity"/>
    <property type="evidence" value="ECO:0007669"/>
    <property type="project" value="UniProtKB-UniRule"/>
</dbReference>
<dbReference type="GO" id="GO:0000287">
    <property type="term" value="F:magnesium ion binding"/>
    <property type="evidence" value="ECO:0007669"/>
    <property type="project" value="UniProtKB-UniRule"/>
</dbReference>
<dbReference type="GO" id="GO:0009097">
    <property type="term" value="P:isoleucine biosynthetic process"/>
    <property type="evidence" value="ECO:0007669"/>
    <property type="project" value="UniProtKB-UniRule"/>
</dbReference>
<dbReference type="GO" id="GO:0009099">
    <property type="term" value="P:L-valine biosynthetic process"/>
    <property type="evidence" value="ECO:0007669"/>
    <property type="project" value="UniProtKB-UniRule"/>
</dbReference>
<dbReference type="FunFam" id="3.50.30.80:FF:000001">
    <property type="entry name" value="Dihydroxy-acid dehydratase"/>
    <property type="match status" value="1"/>
</dbReference>
<dbReference type="Gene3D" id="3.50.30.80">
    <property type="entry name" value="IlvD/EDD C-terminal domain-like"/>
    <property type="match status" value="1"/>
</dbReference>
<dbReference type="HAMAP" id="MF_00012">
    <property type="entry name" value="IlvD"/>
    <property type="match status" value="1"/>
</dbReference>
<dbReference type="InterPro" id="IPR042096">
    <property type="entry name" value="Dihydro-acid_dehy_C"/>
</dbReference>
<dbReference type="InterPro" id="IPR004404">
    <property type="entry name" value="DihydroxyA_deHydtase"/>
</dbReference>
<dbReference type="InterPro" id="IPR020558">
    <property type="entry name" value="DiOHA_6PGluconate_deHydtase_CS"/>
</dbReference>
<dbReference type="InterPro" id="IPR056740">
    <property type="entry name" value="ILV_EDD_C"/>
</dbReference>
<dbReference type="InterPro" id="IPR000581">
    <property type="entry name" value="ILV_EDD_N"/>
</dbReference>
<dbReference type="InterPro" id="IPR037237">
    <property type="entry name" value="IlvD/EDD_N"/>
</dbReference>
<dbReference type="NCBIfam" id="TIGR00110">
    <property type="entry name" value="ilvD"/>
    <property type="match status" value="1"/>
</dbReference>
<dbReference type="NCBIfam" id="NF009103">
    <property type="entry name" value="PRK12448.1"/>
    <property type="match status" value="1"/>
</dbReference>
<dbReference type="PANTHER" id="PTHR43661">
    <property type="entry name" value="D-XYLONATE DEHYDRATASE"/>
    <property type="match status" value="1"/>
</dbReference>
<dbReference type="PANTHER" id="PTHR43661:SF3">
    <property type="entry name" value="D-XYLONATE DEHYDRATASE YAGF-RELATED"/>
    <property type="match status" value="1"/>
</dbReference>
<dbReference type="Pfam" id="PF24877">
    <property type="entry name" value="ILV_EDD_C"/>
    <property type="match status" value="1"/>
</dbReference>
<dbReference type="Pfam" id="PF00920">
    <property type="entry name" value="ILVD_EDD_N"/>
    <property type="match status" value="1"/>
</dbReference>
<dbReference type="SUPFAM" id="SSF143975">
    <property type="entry name" value="IlvD/EDD N-terminal domain-like"/>
    <property type="match status" value="1"/>
</dbReference>
<dbReference type="SUPFAM" id="SSF52016">
    <property type="entry name" value="LeuD/IlvD-like"/>
    <property type="match status" value="1"/>
</dbReference>
<dbReference type="PROSITE" id="PS00886">
    <property type="entry name" value="ILVD_EDD_1"/>
    <property type="match status" value="1"/>
</dbReference>
<dbReference type="PROSITE" id="PS00887">
    <property type="entry name" value="ILVD_EDD_2"/>
    <property type="match status" value="1"/>
</dbReference>
<comment type="function">
    <text evidence="1">Functions in the biosynthesis of branched-chain amino acids. Catalyzes the dehydration of (2R,3R)-2,3-dihydroxy-3-methylpentanoate (2,3-dihydroxy-3-methylvalerate) into 2-oxo-3-methylpentanoate (2-oxo-3-methylvalerate) and of (2R)-2,3-dihydroxy-3-methylbutanoate (2,3-dihydroxyisovalerate) into 2-oxo-3-methylbutanoate (2-oxoisovalerate), the penultimate precursor to L-isoleucine and L-valine, respectively.</text>
</comment>
<comment type="catalytic activity">
    <reaction evidence="1">
        <text>(2R)-2,3-dihydroxy-3-methylbutanoate = 3-methyl-2-oxobutanoate + H2O</text>
        <dbReference type="Rhea" id="RHEA:24809"/>
        <dbReference type="ChEBI" id="CHEBI:11851"/>
        <dbReference type="ChEBI" id="CHEBI:15377"/>
        <dbReference type="ChEBI" id="CHEBI:49072"/>
        <dbReference type="EC" id="4.2.1.9"/>
    </reaction>
    <physiologicalReaction direction="left-to-right" evidence="1">
        <dbReference type="Rhea" id="RHEA:24810"/>
    </physiologicalReaction>
</comment>
<comment type="catalytic activity">
    <reaction evidence="1">
        <text>(2R,3R)-2,3-dihydroxy-3-methylpentanoate = (S)-3-methyl-2-oxopentanoate + H2O</text>
        <dbReference type="Rhea" id="RHEA:27694"/>
        <dbReference type="ChEBI" id="CHEBI:15377"/>
        <dbReference type="ChEBI" id="CHEBI:35146"/>
        <dbReference type="ChEBI" id="CHEBI:49258"/>
        <dbReference type="EC" id="4.2.1.9"/>
    </reaction>
    <physiologicalReaction direction="left-to-right" evidence="1">
        <dbReference type="Rhea" id="RHEA:27695"/>
    </physiologicalReaction>
</comment>
<comment type="cofactor">
    <cofactor evidence="1">
        <name>[2Fe-2S] cluster</name>
        <dbReference type="ChEBI" id="CHEBI:190135"/>
    </cofactor>
    <text evidence="1">Binds 1 [2Fe-2S] cluster per subunit. This cluster acts as a Lewis acid cofactor.</text>
</comment>
<comment type="cofactor">
    <cofactor evidence="1">
        <name>Mg(2+)</name>
        <dbReference type="ChEBI" id="CHEBI:18420"/>
    </cofactor>
</comment>
<comment type="pathway">
    <text evidence="1">Amino-acid biosynthesis; L-isoleucine biosynthesis; L-isoleucine from 2-oxobutanoate: step 3/4.</text>
</comment>
<comment type="pathway">
    <text evidence="1">Amino-acid biosynthesis; L-valine biosynthesis; L-valine from pyruvate: step 3/4.</text>
</comment>
<comment type="subunit">
    <text evidence="1">Homodimer.</text>
</comment>
<comment type="similarity">
    <text evidence="1">Belongs to the IlvD/Edd family.</text>
</comment>
<reference key="1">
    <citation type="journal article" date="2008" name="Genome Res.">
        <title>Comparative genome analysis of Salmonella enteritidis PT4 and Salmonella gallinarum 287/91 provides insights into evolutionary and host adaptation pathways.</title>
        <authorList>
            <person name="Thomson N.R."/>
            <person name="Clayton D.J."/>
            <person name="Windhorst D."/>
            <person name="Vernikos G."/>
            <person name="Davidson S."/>
            <person name="Churcher C."/>
            <person name="Quail M.A."/>
            <person name="Stevens M."/>
            <person name="Jones M.A."/>
            <person name="Watson M."/>
            <person name="Barron A."/>
            <person name="Layton A."/>
            <person name="Pickard D."/>
            <person name="Kingsley R.A."/>
            <person name="Bignell A."/>
            <person name="Clark L."/>
            <person name="Harris B."/>
            <person name="Ormond D."/>
            <person name="Abdellah Z."/>
            <person name="Brooks K."/>
            <person name="Cherevach I."/>
            <person name="Chillingworth T."/>
            <person name="Woodward J."/>
            <person name="Norberczak H."/>
            <person name="Lord A."/>
            <person name="Arrowsmith C."/>
            <person name="Jagels K."/>
            <person name="Moule S."/>
            <person name="Mungall K."/>
            <person name="Saunders M."/>
            <person name="Whitehead S."/>
            <person name="Chabalgoity J.A."/>
            <person name="Maskell D."/>
            <person name="Humphreys T."/>
            <person name="Roberts M."/>
            <person name="Barrow P.A."/>
            <person name="Dougan G."/>
            <person name="Parkhill J."/>
        </authorList>
    </citation>
    <scope>NUCLEOTIDE SEQUENCE [LARGE SCALE GENOMIC DNA]</scope>
    <source>
        <strain>287/91 / NCTC 13346</strain>
    </source>
</reference>
<proteinExistence type="inferred from homology"/>
<name>ILVD_SALG2</name>
<keyword id="KW-0001">2Fe-2S</keyword>
<keyword id="KW-0028">Amino-acid biosynthesis</keyword>
<keyword id="KW-0100">Branched-chain amino acid biosynthesis</keyword>
<keyword id="KW-0408">Iron</keyword>
<keyword id="KW-0411">Iron-sulfur</keyword>
<keyword id="KW-0456">Lyase</keyword>
<keyword id="KW-0460">Magnesium</keyword>
<keyword id="KW-0479">Metal-binding</keyword>
<organism>
    <name type="scientific">Salmonella gallinarum (strain 287/91 / NCTC 13346)</name>
    <dbReference type="NCBI Taxonomy" id="550538"/>
    <lineage>
        <taxon>Bacteria</taxon>
        <taxon>Pseudomonadati</taxon>
        <taxon>Pseudomonadota</taxon>
        <taxon>Gammaproteobacteria</taxon>
        <taxon>Enterobacterales</taxon>
        <taxon>Enterobacteriaceae</taxon>
        <taxon>Salmonella</taxon>
    </lineage>
</organism>